<proteinExistence type="evidence at transcript level"/>
<protein>
    <recommendedName>
        <fullName>Transcription factor PCF3</fullName>
    </recommendedName>
</protein>
<dbReference type="EMBL" id="AC120539">
    <property type="protein sequence ID" value="AAX95798.1"/>
    <property type="molecule type" value="Genomic_DNA"/>
</dbReference>
<dbReference type="EMBL" id="DP000010">
    <property type="protein sequence ID" value="ABA91711.2"/>
    <property type="status" value="ALT_SEQ"/>
    <property type="molecule type" value="Genomic_DNA"/>
</dbReference>
<dbReference type="EMBL" id="AP008217">
    <property type="protein sequence ID" value="BAF27725.1"/>
    <property type="status" value="ALT_INIT"/>
    <property type="molecule type" value="Genomic_DNA"/>
</dbReference>
<dbReference type="EMBL" id="AP014967">
    <property type="status" value="NOT_ANNOTATED_CDS"/>
    <property type="molecule type" value="Genomic_DNA"/>
</dbReference>
<dbReference type="EMBL" id="AB071804">
    <property type="protein sequence ID" value="BAB92951.1"/>
    <property type="molecule type" value="mRNA"/>
</dbReference>
<dbReference type="SMR" id="Q53PH2"/>
<dbReference type="FunCoup" id="Q53PH2">
    <property type="interactions" value="358"/>
</dbReference>
<dbReference type="STRING" id="39947.Q53PH2"/>
<dbReference type="PaxDb" id="39947-Q53PH2"/>
<dbReference type="KEGG" id="dosa:Os11g0175700"/>
<dbReference type="eggNOG" id="ENOG502QVJ6">
    <property type="taxonomic scope" value="Eukaryota"/>
</dbReference>
<dbReference type="HOGENOM" id="CLU_025170_2_0_1"/>
<dbReference type="InParanoid" id="Q53PH2"/>
<dbReference type="Proteomes" id="UP000000763">
    <property type="component" value="Chromosome 11"/>
</dbReference>
<dbReference type="Proteomes" id="UP000059680">
    <property type="component" value="Chromosome 11"/>
</dbReference>
<dbReference type="GO" id="GO:0005634">
    <property type="term" value="C:nucleus"/>
    <property type="evidence" value="ECO:0000318"/>
    <property type="project" value="GO_Central"/>
</dbReference>
<dbReference type="GO" id="GO:0003700">
    <property type="term" value="F:DNA-binding transcription factor activity"/>
    <property type="evidence" value="ECO:0000318"/>
    <property type="project" value="GO_Central"/>
</dbReference>
<dbReference type="GO" id="GO:0043565">
    <property type="term" value="F:sequence-specific DNA binding"/>
    <property type="evidence" value="ECO:0000318"/>
    <property type="project" value="GO_Central"/>
</dbReference>
<dbReference type="InterPro" id="IPR017887">
    <property type="entry name" value="TF_TCP_subgr"/>
</dbReference>
<dbReference type="InterPro" id="IPR005333">
    <property type="entry name" value="Transcription_factor_TCP"/>
</dbReference>
<dbReference type="PANTHER" id="PTHR31072:SF262">
    <property type="entry name" value="TRANSCRIPTION FACTOR PCF3"/>
    <property type="match status" value="1"/>
</dbReference>
<dbReference type="PANTHER" id="PTHR31072">
    <property type="entry name" value="TRANSCRIPTION FACTOR TCP4-RELATED"/>
    <property type="match status" value="1"/>
</dbReference>
<dbReference type="Pfam" id="PF03634">
    <property type="entry name" value="TCP"/>
    <property type="match status" value="1"/>
</dbReference>
<dbReference type="PROSITE" id="PS51369">
    <property type="entry name" value="TCP"/>
    <property type="match status" value="1"/>
</dbReference>
<keyword id="KW-0010">Activator</keyword>
<keyword id="KW-0217">Developmental protein</keyword>
<keyword id="KW-0238">DNA-binding</keyword>
<keyword id="KW-0539">Nucleus</keyword>
<keyword id="KW-1185">Reference proteome</keyword>
<keyword id="KW-0804">Transcription</keyword>
<keyword id="KW-0805">Transcription regulation</keyword>
<gene>
    <name type="primary">PCF3</name>
    <name type="ordered locus">Os11g0175700</name>
    <name type="ordered locus">LOC_Os11g07460</name>
</gene>
<name>PCF3_ORYSJ</name>
<organism>
    <name type="scientific">Oryza sativa subsp. japonica</name>
    <name type="common">Rice</name>
    <dbReference type="NCBI Taxonomy" id="39947"/>
    <lineage>
        <taxon>Eukaryota</taxon>
        <taxon>Viridiplantae</taxon>
        <taxon>Streptophyta</taxon>
        <taxon>Embryophyta</taxon>
        <taxon>Tracheophyta</taxon>
        <taxon>Spermatophyta</taxon>
        <taxon>Magnoliopsida</taxon>
        <taxon>Liliopsida</taxon>
        <taxon>Poales</taxon>
        <taxon>Poaceae</taxon>
        <taxon>BOP clade</taxon>
        <taxon>Oryzoideae</taxon>
        <taxon>Oryzeae</taxon>
        <taxon>Oryzinae</taxon>
        <taxon>Oryza</taxon>
        <taxon>Oryza sativa</taxon>
    </lineage>
</organism>
<evidence type="ECO:0000255" key="1">
    <source>
        <dbReference type="PROSITE-ProRule" id="PRU00701"/>
    </source>
</evidence>
<evidence type="ECO:0000256" key="2">
    <source>
        <dbReference type="SAM" id="MobiDB-lite"/>
    </source>
</evidence>
<evidence type="ECO:0000269" key="3">
    <source>
    </source>
</evidence>
<evidence type="ECO:0000305" key="4"/>
<feature type="chain" id="PRO_0000330806" description="Transcription factor PCF3">
    <location>
        <begin position="1"/>
        <end position="448"/>
    </location>
</feature>
<feature type="domain" description="TCP" evidence="1">
    <location>
        <begin position="152"/>
        <end position="206"/>
    </location>
</feature>
<feature type="region of interest" description="Disordered" evidence="2">
    <location>
        <begin position="34"/>
        <end position="68"/>
    </location>
</feature>
<feature type="region of interest" description="Disordered" evidence="2">
    <location>
        <begin position="142"/>
        <end position="161"/>
    </location>
</feature>
<feature type="region of interest" description="Disordered" evidence="2">
    <location>
        <begin position="258"/>
        <end position="282"/>
    </location>
</feature>
<feature type="region of interest" description="Disordered" evidence="2">
    <location>
        <begin position="295"/>
        <end position="336"/>
    </location>
</feature>
<feature type="region of interest" description="Disordered" evidence="2">
    <location>
        <begin position="387"/>
        <end position="448"/>
    </location>
</feature>
<feature type="compositionally biased region" description="Low complexity" evidence="2">
    <location>
        <begin position="34"/>
        <end position="62"/>
    </location>
</feature>
<feature type="compositionally biased region" description="Pro residues" evidence="2">
    <location>
        <begin position="263"/>
        <end position="277"/>
    </location>
</feature>
<feature type="compositionally biased region" description="Basic and acidic residues" evidence="2">
    <location>
        <begin position="295"/>
        <end position="304"/>
    </location>
</feature>
<feature type="compositionally biased region" description="Low complexity" evidence="2">
    <location>
        <begin position="391"/>
        <end position="406"/>
    </location>
</feature>
<feature type="compositionally biased region" description="Basic and acidic residues" evidence="2">
    <location>
        <begin position="413"/>
        <end position="432"/>
    </location>
</feature>
<feature type="sequence conflict" description="In Ref. 2; BAB92951." evidence="4" ref="2">
    <original>VGG</original>
    <variation>GTS</variation>
    <location>
        <begin position="27"/>
        <end position="29"/>
    </location>
</feature>
<reference key="1">
    <citation type="journal article" date="2005" name="BMC Biol.">
        <title>The sequence of rice chromosomes 11 and 12, rich in disease resistance genes and recent gene duplications.</title>
        <authorList>
            <consortium name="The rice chromosomes 11 and 12 sequencing consortia"/>
        </authorList>
    </citation>
    <scope>NUCLEOTIDE SEQUENCE [LARGE SCALE GENOMIC DNA]</scope>
    <source>
        <strain>cv. Nipponbare</strain>
    </source>
</reference>
<reference key="2">
    <citation type="journal article" date="2005" name="Nature">
        <title>The map-based sequence of the rice genome.</title>
        <authorList>
            <consortium name="International rice genome sequencing project (IRGSP)"/>
        </authorList>
    </citation>
    <scope>NUCLEOTIDE SEQUENCE [LARGE SCALE GENOMIC DNA]</scope>
    <source>
        <strain>cv. Nipponbare</strain>
    </source>
</reference>
<reference key="3">
    <citation type="journal article" date="2008" name="Nucleic Acids Res.">
        <title>The rice annotation project database (RAP-DB): 2008 update.</title>
        <authorList>
            <consortium name="The rice annotation project (RAP)"/>
        </authorList>
    </citation>
    <scope>GENOME REANNOTATION</scope>
    <source>
        <strain>cv. Nipponbare</strain>
    </source>
</reference>
<reference key="4">
    <citation type="journal article" date="2013" name="Rice">
        <title>Improvement of the Oryza sativa Nipponbare reference genome using next generation sequence and optical map data.</title>
        <authorList>
            <person name="Kawahara Y."/>
            <person name="de la Bastide M."/>
            <person name="Hamilton J.P."/>
            <person name="Kanamori H."/>
            <person name="McCombie W.R."/>
            <person name="Ouyang S."/>
            <person name="Schwartz D.C."/>
            <person name="Tanaka T."/>
            <person name="Wu J."/>
            <person name="Zhou S."/>
            <person name="Childs K.L."/>
            <person name="Davidson R.M."/>
            <person name="Lin H."/>
            <person name="Quesada-Ocampo L."/>
            <person name="Vaillancourt B."/>
            <person name="Sakai H."/>
            <person name="Lee S.S."/>
            <person name="Kim J."/>
            <person name="Numa H."/>
            <person name="Itoh T."/>
            <person name="Buell C.R."/>
            <person name="Matsumoto T."/>
        </authorList>
    </citation>
    <scope>GENOME REANNOTATION</scope>
    <source>
        <strain>cv. Nipponbare</strain>
    </source>
</reference>
<reference key="5">
    <citation type="journal article" date="2002" name="Plant J.">
        <title>DNA binding and dimerization specificity and potential targets for the TCP protein family.</title>
        <authorList>
            <person name="Kosugi S."/>
            <person name="Ohashi Y."/>
        </authorList>
    </citation>
    <scope>NUCLEOTIDE SEQUENCE [MRNA] OF 27-448</scope>
    <scope>FUNCTION</scope>
    <source>
        <strain>cv. Nipponbare</strain>
    </source>
</reference>
<accession>Q53PH2</accession>
<accession>Q0IU90</accession>
<accession>Q2R9V3</accession>
<accession>Q8LP98</accession>
<comment type="function">
    <text evidence="3">Transcription activator. Binds the promoter core sequence 5'-GGNCC-3'.</text>
</comment>
<comment type="subunit">
    <text evidence="4">Forms homodimers and heterodimers.</text>
</comment>
<comment type="subcellular location">
    <subcellularLocation>
        <location evidence="4">Nucleus</location>
    </subcellularLocation>
</comment>
<comment type="sequence caution" evidence="4">
    <conflict type="erroneous gene model prediction">
        <sequence resource="EMBL-CDS" id="ABA91711"/>
    </conflict>
</comment>
<comment type="sequence caution" evidence="4">
    <conflict type="erroneous initiation">
        <sequence resource="EMBL-CDS" id="BAF27725"/>
    </conflict>
</comment>
<sequence>MIKDLRTLESWAKEKPEIEQPALQAVVGGGGLRAAAAAAEGGMEQQAAPSSSTSTSTNSSRSTSDHHAAAAAAAAAAAAQVAHQHHPFYYAAAQGGANTMPAPASFMGSLAIVPAAAAPGGGGGQVQAAAAPVASSEKKAVVAAGAGAKRPTKDRHTKVEGRGRRIRMPALCAARVFQLTRELGHKTDGETIEWLLQQAEPAIVAATGTGTIPANFSSLAVSLRSAASHSSSPRAAPFHHLQQQQQHDVAAMLGFHHHHHQLLPPPPPHQHPEPTPQDPGAGEFMRKRYREADDLFKDTSRQDPVDGATGEAEQKARAAAAAAAPPPTAPSAMWAVGPNTTGATAAFWMQPAWAFPHGAGAGAAGNTVQAPLQFMSRSSFPTAMNVTMADNNNSSNNNLGMLAALNAGGGGRSGEHQHQHEGQSPAEMDHQRRANGGGGEAGGAASSQ</sequence>